<comment type="subcellular location">
    <subcellularLocation>
        <location evidence="3">Membrane</location>
        <topology evidence="3">Multi-pass membrane protein</topology>
    </subcellularLocation>
</comment>
<comment type="similarity">
    <text evidence="3">Belongs to the TMEM88 family.</text>
</comment>
<dbReference type="EMBL" id="AL391244">
    <property type="status" value="NOT_ANNOTATED_CDS"/>
    <property type="molecule type" value="Genomic_DNA"/>
</dbReference>
<dbReference type="CCDS" id="CCDS57964.1"/>
<dbReference type="RefSeq" id="NP_001140157.1">
    <property type="nucleotide sequence ID" value="NM_001146685.2"/>
</dbReference>
<dbReference type="BioGRID" id="569197">
    <property type="interactions" value="1"/>
</dbReference>
<dbReference type="FunCoup" id="A6NKF7">
    <property type="interactions" value="236"/>
</dbReference>
<dbReference type="STRING" id="9606.ENSP00000455099"/>
<dbReference type="GlyGen" id="A6NKF7">
    <property type="glycosylation" value="1 site"/>
</dbReference>
<dbReference type="iPTMnet" id="A6NKF7"/>
<dbReference type="PhosphoSitePlus" id="A6NKF7"/>
<dbReference type="BioMuta" id="TMEM88B"/>
<dbReference type="MassIVE" id="A6NKF7"/>
<dbReference type="PaxDb" id="9606-ENSP00000455099"/>
<dbReference type="PeptideAtlas" id="A6NKF7"/>
<dbReference type="ProteomicsDB" id="1412"/>
<dbReference type="Antibodypedia" id="74565">
    <property type="antibodies" value="5 antibodies from 5 providers"/>
</dbReference>
<dbReference type="DNASU" id="643965"/>
<dbReference type="Ensembl" id="ENST00000378821.4">
    <property type="protein sequence ID" value="ENSP00000455099.1"/>
    <property type="gene ID" value="ENSG00000205116.4"/>
</dbReference>
<dbReference type="GeneID" id="643965"/>
<dbReference type="KEGG" id="hsa:643965"/>
<dbReference type="MANE-Select" id="ENST00000378821.4">
    <property type="protein sequence ID" value="ENSP00000455099.1"/>
    <property type="RefSeq nucleotide sequence ID" value="NM_001146685.2"/>
    <property type="RefSeq protein sequence ID" value="NP_001140157.1"/>
</dbReference>
<dbReference type="UCSC" id="uc010nyp.2">
    <property type="organism name" value="human"/>
</dbReference>
<dbReference type="AGR" id="HGNC:37099"/>
<dbReference type="CTD" id="643965"/>
<dbReference type="GeneCards" id="TMEM88B"/>
<dbReference type="HGNC" id="HGNC:37099">
    <property type="gene designation" value="TMEM278"/>
</dbReference>
<dbReference type="HPA" id="ENSG00000205116">
    <property type="expression patterns" value="Tissue enriched (brain)"/>
</dbReference>
<dbReference type="neXtProt" id="NX_A6NKF7"/>
<dbReference type="OpenTargets" id="ENSG00000205116"/>
<dbReference type="PharmGKB" id="PA165752745"/>
<dbReference type="VEuPathDB" id="HostDB:ENSG00000205116"/>
<dbReference type="eggNOG" id="ENOG502RYZS">
    <property type="taxonomic scope" value="Eukaryota"/>
</dbReference>
<dbReference type="GeneTree" id="ENSGT00730000111599"/>
<dbReference type="HOGENOM" id="CLU_1602208_0_0_1"/>
<dbReference type="InParanoid" id="A6NKF7"/>
<dbReference type="OMA" id="EEQLCAW"/>
<dbReference type="PAN-GO" id="A6NKF7">
    <property type="GO annotations" value="2 GO annotations based on evolutionary models"/>
</dbReference>
<dbReference type="PhylomeDB" id="A6NKF7"/>
<dbReference type="TreeFam" id="TF332743"/>
<dbReference type="PathwayCommons" id="A6NKF7"/>
<dbReference type="SignaLink" id="A6NKF7"/>
<dbReference type="BioGRID-ORCS" id="643965">
    <property type="hits" value="15 hits in 1138 CRISPR screens"/>
</dbReference>
<dbReference type="Pharos" id="A6NKF7">
    <property type="development level" value="Tdark"/>
</dbReference>
<dbReference type="PRO" id="PR:A6NKF7"/>
<dbReference type="Proteomes" id="UP000005640">
    <property type="component" value="Chromosome 1"/>
</dbReference>
<dbReference type="RNAct" id="A6NKF7">
    <property type="molecule type" value="protein"/>
</dbReference>
<dbReference type="Bgee" id="ENSG00000205116">
    <property type="expression patterns" value="Expressed in C1 segment of cervical spinal cord and 71 other cell types or tissues"/>
</dbReference>
<dbReference type="GO" id="GO:0005886">
    <property type="term" value="C:plasma membrane"/>
    <property type="evidence" value="ECO:0000318"/>
    <property type="project" value="GO_Central"/>
</dbReference>
<dbReference type="GO" id="GO:0090090">
    <property type="term" value="P:negative regulation of canonical Wnt signaling pathway"/>
    <property type="evidence" value="ECO:0000318"/>
    <property type="project" value="GO_Central"/>
</dbReference>
<dbReference type="InterPro" id="IPR033355">
    <property type="entry name" value="TMEM88"/>
</dbReference>
<dbReference type="PANTHER" id="PTHR28628">
    <property type="entry name" value="TRANSMEMBRANE PROTEIN 88-RELATED"/>
    <property type="match status" value="1"/>
</dbReference>
<dbReference type="PANTHER" id="PTHR28628:SF2">
    <property type="entry name" value="TRANSMEMBRANE PROTEIN 88B"/>
    <property type="match status" value="1"/>
</dbReference>
<organism>
    <name type="scientific">Homo sapiens</name>
    <name type="common">Human</name>
    <dbReference type="NCBI Taxonomy" id="9606"/>
    <lineage>
        <taxon>Eukaryota</taxon>
        <taxon>Metazoa</taxon>
        <taxon>Chordata</taxon>
        <taxon>Craniata</taxon>
        <taxon>Vertebrata</taxon>
        <taxon>Euteleostomi</taxon>
        <taxon>Mammalia</taxon>
        <taxon>Eutheria</taxon>
        <taxon>Euarchontoglires</taxon>
        <taxon>Primates</taxon>
        <taxon>Haplorrhini</taxon>
        <taxon>Catarrhini</taxon>
        <taxon>Hominidae</taxon>
        <taxon>Homo</taxon>
    </lineage>
</organism>
<evidence type="ECO:0000255" key="1"/>
<evidence type="ECO:0000256" key="2">
    <source>
        <dbReference type="SAM" id="MobiDB-lite"/>
    </source>
</evidence>
<evidence type="ECO:0000305" key="3"/>
<evidence type="ECO:0000312" key="4">
    <source>
        <dbReference type="HGNC" id="HGNC:37099"/>
    </source>
</evidence>
<accession>A6NKF7</accession>
<protein>
    <recommendedName>
        <fullName>Transmembrane protein 278</fullName>
    </recommendedName>
    <alternativeName>
        <fullName>Transmembrane protein 88B</fullName>
    </alternativeName>
</protein>
<sequence length="163" mass="17097">MSEQGRETEEEEGGGGASDTAPMLPRGPPDHQASALTCPGWSGPPLLPGRLLAGLLLHLLLPAAAFLLVLLPAAAVVYLGFLCHSRVHPAPGPRCRALFSDRGSAALIVFGLLSLPPLLVLASAVRARLARRLRPLLPPPAGTPGPRRPPGRPDEDEQLCAWV</sequence>
<reference key="1">
    <citation type="journal article" date="2006" name="Nature">
        <title>The DNA sequence and biological annotation of human chromosome 1.</title>
        <authorList>
            <person name="Gregory S.G."/>
            <person name="Barlow K.F."/>
            <person name="McLay K.E."/>
            <person name="Kaul R."/>
            <person name="Swarbreck D."/>
            <person name="Dunham A."/>
            <person name="Scott C.E."/>
            <person name="Howe K.L."/>
            <person name="Woodfine K."/>
            <person name="Spencer C.C.A."/>
            <person name="Jones M.C."/>
            <person name="Gillson C."/>
            <person name="Searle S."/>
            <person name="Zhou Y."/>
            <person name="Kokocinski F."/>
            <person name="McDonald L."/>
            <person name="Evans R."/>
            <person name="Phillips K."/>
            <person name="Atkinson A."/>
            <person name="Cooper R."/>
            <person name="Jones C."/>
            <person name="Hall R.E."/>
            <person name="Andrews T.D."/>
            <person name="Lloyd C."/>
            <person name="Ainscough R."/>
            <person name="Almeida J.P."/>
            <person name="Ambrose K.D."/>
            <person name="Anderson F."/>
            <person name="Andrew R.W."/>
            <person name="Ashwell R.I.S."/>
            <person name="Aubin K."/>
            <person name="Babbage A.K."/>
            <person name="Bagguley C.L."/>
            <person name="Bailey J."/>
            <person name="Beasley H."/>
            <person name="Bethel G."/>
            <person name="Bird C.P."/>
            <person name="Bray-Allen S."/>
            <person name="Brown J.Y."/>
            <person name="Brown A.J."/>
            <person name="Buckley D."/>
            <person name="Burton J."/>
            <person name="Bye J."/>
            <person name="Carder C."/>
            <person name="Chapman J.C."/>
            <person name="Clark S.Y."/>
            <person name="Clarke G."/>
            <person name="Clee C."/>
            <person name="Cobley V."/>
            <person name="Collier R.E."/>
            <person name="Corby N."/>
            <person name="Coville G.J."/>
            <person name="Davies J."/>
            <person name="Deadman R."/>
            <person name="Dunn M."/>
            <person name="Earthrowl M."/>
            <person name="Ellington A.G."/>
            <person name="Errington H."/>
            <person name="Frankish A."/>
            <person name="Frankland J."/>
            <person name="French L."/>
            <person name="Garner P."/>
            <person name="Garnett J."/>
            <person name="Gay L."/>
            <person name="Ghori M.R.J."/>
            <person name="Gibson R."/>
            <person name="Gilby L.M."/>
            <person name="Gillett W."/>
            <person name="Glithero R.J."/>
            <person name="Grafham D.V."/>
            <person name="Griffiths C."/>
            <person name="Griffiths-Jones S."/>
            <person name="Grocock R."/>
            <person name="Hammond S."/>
            <person name="Harrison E.S.I."/>
            <person name="Hart E."/>
            <person name="Haugen E."/>
            <person name="Heath P.D."/>
            <person name="Holmes S."/>
            <person name="Holt K."/>
            <person name="Howden P.J."/>
            <person name="Hunt A.R."/>
            <person name="Hunt S.E."/>
            <person name="Hunter G."/>
            <person name="Isherwood J."/>
            <person name="James R."/>
            <person name="Johnson C."/>
            <person name="Johnson D."/>
            <person name="Joy A."/>
            <person name="Kay M."/>
            <person name="Kershaw J.K."/>
            <person name="Kibukawa M."/>
            <person name="Kimberley A.M."/>
            <person name="King A."/>
            <person name="Knights A.J."/>
            <person name="Lad H."/>
            <person name="Laird G."/>
            <person name="Lawlor S."/>
            <person name="Leongamornlert D.A."/>
            <person name="Lloyd D.M."/>
            <person name="Loveland J."/>
            <person name="Lovell J."/>
            <person name="Lush M.J."/>
            <person name="Lyne R."/>
            <person name="Martin S."/>
            <person name="Mashreghi-Mohammadi M."/>
            <person name="Matthews L."/>
            <person name="Matthews N.S.W."/>
            <person name="McLaren S."/>
            <person name="Milne S."/>
            <person name="Mistry S."/>
            <person name="Moore M.J.F."/>
            <person name="Nickerson T."/>
            <person name="O'Dell C.N."/>
            <person name="Oliver K."/>
            <person name="Palmeiri A."/>
            <person name="Palmer S.A."/>
            <person name="Parker A."/>
            <person name="Patel D."/>
            <person name="Pearce A.V."/>
            <person name="Peck A.I."/>
            <person name="Pelan S."/>
            <person name="Phelps K."/>
            <person name="Phillimore B.J."/>
            <person name="Plumb R."/>
            <person name="Rajan J."/>
            <person name="Raymond C."/>
            <person name="Rouse G."/>
            <person name="Saenphimmachak C."/>
            <person name="Sehra H.K."/>
            <person name="Sheridan E."/>
            <person name="Shownkeen R."/>
            <person name="Sims S."/>
            <person name="Skuce C.D."/>
            <person name="Smith M."/>
            <person name="Steward C."/>
            <person name="Subramanian S."/>
            <person name="Sycamore N."/>
            <person name="Tracey A."/>
            <person name="Tromans A."/>
            <person name="Van Helmond Z."/>
            <person name="Wall M."/>
            <person name="Wallis J.M."/>
            <person name="White S."/>
            <person name="Whitehead S.L."/>
            <person name="Wilkinson J.E."/>
            <person name="Willey D.L."/>
            <person name="Williams H."/>
            <person name="Wilming L."/>
            <person name="Wray P.W."/>
            <person name="Wu Z."/>
            <person name="Coulson A."/>
            <person name="Vaudin M."/>
            <person name="Sulston J.E."/>
            <person name="Durbin R.M."/>
            <person name="Hubbard T."/>
            <person name="Wooster R."/>
            <person name="Dunham I."/>
            <person name="Carter N.P."/>
            <person name="McVean G."/>
            <person name="Ross M.T."/>
            <person name="Harrow J."/>
            <person name="Olson M.V."/>
            <person name="Beck S."/>
            <person name="Rogers J."/>
            <person name="Bentley D.R."/>
        </authorList>
    </citation>
    <scope>NUCLEOTIDE SEQUENCE [LARGE SCALE GENOMIC DNA]</scope>
</reference>
<name>TM278_HUMAN</name>
<gene>
    <name evidence="4" type="primary">TMEM278</name>
    <name type="synonym">TMEM88B</name>
</gene>
<feature type="chain" id="PRO_0000346446" description="Transmembrane protein 278">
    <location>
        <begin position="1"/>
        <end position="163"/>
    </location>
</feature>
<feature type="transmembrane region" description="Helical" evidence="1">
    <location>
        <begin position="51"/>
        <end position="71"/>
    </location>
</feature>
<feature type="transmembrane region" description="Helical" evidence="1">
    <location>
        <begin position="105"/>
        <end position="125"/>
    </location>
</feature>
<feature type="region of interest" description="Disordered" evidence="2">
    <location>
        <begin position="1"/>
        <end position="37"/>
    </location>
</feature>
<feature type="region of interest" description="Disordered" evidence="2">
    <location>
        <begin position="136"/>
        <end position="156"/>
    </location>
</feature>
<feature type="compositionally biased region" description="Pro residues" evidence="2">
    <location>
        <begin position="136"/>
        <end position="148"/>
    </location>
</feature>
<proteinExistence type="evidence at protein level"/>
<keyword id="KW-0472">Membrane</keyword>
<keyword id="KW-1267">Proteomics identification</keyword>
<keyword id="KW-1185">Reference proteome</keyword>
<keyword id="KW-0812">Transmembrane</keyword>
<keyword id="KW-1133">Transmembrane helix</keyword>